<dbReference type="EC" id="1.1.1.282" evidence="1"/>
<dbReference type="EMBL" id="AE017220">
    <property type="protein sequence ID" value="AAX65284.1"/>
    <property type="molecule type" value="Genomic_DNA"/>
</dbReference>
<dbReference type="RefSeq" id="WP_000383488.1">
    <property type="nucleotide sequence ID" value="NC_006905.1"/>
</dbReference>
<dbReference type="SMR" id="Q57PS7"/>
<dbReference type="KEGG" id="sec:SCH_1378"/>
<dbReference type="HOGENOM" id="CLU_044063_4_4_6"/>
<dbReference type="UniPathway" id="UPA00053">
    <property type="reaction ID" value="UER00087"/>
</dbReference>
<dbReference type="Proteomes" id="UP000000538">
    <property type="component" value="Chromosome"/>
</dbReference>
<dbReference type="GO" id="GO:0030266">
    <property type="term" value="F:quinate 3-dehydrogenase (NAD+) activity"/>
    <property type="evidence" value="ECO:0007669"/>
    <property type="project" value="UniProtKB-UniRule"/>
</dbReference>
<dbReference type="GO" id="GO:0052733">
    <property type="term" value="F:quinate 3-dehydrogenase (NADP+) activity"/>
    <property type="evidence" value="ECO:0007669"/>
    <property type="project" value="InterPro"/>
</dbReference>
<dbReference type="GO" id="GO:0052734">
    <property type="term" value="F:shikimate 3-dehydrogenase (NAD+) activity"/>
    <property type="evidence" value="ECO:0007669"/>
    <property type="project" value="InterPro"/>
</dbReference>
<dbReference type="GO" id="GO:0004764">
    <property type="term" value="F:shikimate 3-dehydrogenase (NADP+) activity"/>
    <property type="evidence" value="ECO:0007669"/>
    <property type="project" value="UniProtKB-UniRule"/>
</dbReference>
<dbReference type="GO" id="GO:0008652">
    <property type="term" value="P:amino acid biosynthetic process"/>
    <property type="evidence" value="ECO:0007669"/>
    <property type="project" value="UniProtKB-KW"/>
</dbReference>
<dbReference type="GO" id="GO:0009073">
    <property type="term" value="P:aromatic amino acid family biosynthetic process"/>
    <property type="evidence" value="ECO:0007669"/>
    <property type="project" value="UniProtKB-KW"/>
</dbReference>
<dbReference type="GO" id="GO:0009423">
    <property type="term" value="P:chorismate biosynthetic process"/>
    <property type="evidence" value="ECO:0007669"/>
    <property type="project" value="UniProtKB-UniRule"/>
</dbReference>
<dbReference type="GO" id="GO:0019632">
    <property type="term" value="P:shikimate metabolic process"/>
    <property type="evidence" value="ECO:0007669"/>
    <property type="project" value="TreeGrafter"/>
</dbReference>
<dbReference type="CDD" id="cd01065">
    <property type="entry name" value="NAD_bind_Shikimate_DH"/>
    <property type="match status" value="1"/>
</dbReference>
<dbReference type="FunFam" id="3.40.50.10860:FF:000004">
    <property type="entry name" value="Quinate/shikimate dehydrogenase"/>
    <property type="match status" value="1"/>
</dbReference>
<dbReference type="FunFam" id="3.40.50.720:FF:000086">
    <property type="entry name" value="Quinate/shikimate dehydrogenase"/>
    <property type="match status" value="1"/>
</dbReference>
<dbReference type="Gene3D" id="3.40.50.10860">
    <property type="entry name" value="Leucine Dehydrogenase, chain A, domain 1"/>
    <property type="match status" value="1"/>
</dbReference>
<dbReference type="Gene3D" id="3.40.50.720">
    <property type="entry name" value="NAD(P)-binding Rossmann-like Domain"/>
    <property type="match status" value="1"/>
</dbReference>
<dbReference type="HAMAP" id="MF_00222">
    <property type="entry name" value="Shikimate_DH_AroE"/>
    <property type="match status" value="1"/>
</dbReference>
<dbReference type="HAMAP" id="MF_01578">
    <property type="entry name" value="Shikimate_DH_YdiB"/>
    <property type="match status" value="1"/>
</dbReference>
<dbReference type="InterPro" id="IPR046346">
    <property type="entry name" value="Aminoacid_DH-like_N_sf"/>
</dbReference>
<dbReference type="InterPro" id="IPR036291">
    <property type="entry name" value="NAD(P)-bd_dom_sf"/>
</dbReference>
<dbReference type="InterPro" id="IPR022872">
    <property type="entry name" value="Quinate/Shikimate_DH"/>
</dbReference>
<dbReference type="InterPro" id="IPR041121">
    <property type="entry name" value="SDH_C"/>
</dbReference>
<dbReference type="InterPro" id="IPR013708">
    <property type="entry name" value="Shikimate_DH-bd_N"/>
</dbReference>
<dbReference type="InterPro" id="IPR022893">
    <property type="entry name" value="Shikimate_DH_fam"/>
</dbReference>
<dbReference type="NCBIfam" id="NF009390">
    <property type="entry name" value="PRK12749.1"/>
    <property type="match status" value="1"/>
</dbReference>
<dbReference type="PANTHER" id="PTHR21089:SF1">
    <property type="entry name" value="BIFUNCTIONAL 3-DEHYDROQUINATE DEHYDRATASE_SHIKIMATE DEHYDROGENASE, CHLOROPLASTIC"/>
    <property type="match status" value="1"/>
</dbReference>
<dbReference type="PANTHER" id="PTHR21089">
    <property type="entry name" value="SHIKIMATE DEHYDROGENASE"/>
    <property type="match status" value="1"/>
</dbReference>
<dbReference type="Pfam" id="PF18317">
    <property type="entry name" value="SDH_C"/>
    <property type="match status" value="1"/>
</dbReference>
<dbReference type="Pfam" id="PF08501">
    <property type="entry name" value="Shikimate_dh_N"/>
    <property type="match status" value="1"/>
</dbReference>
<dbReference type="SUPFAM" id="SSF53223">
    <property type="entry name" value="Aminoacid dehydrogenase-like, N-terminal domain"/>
    <property type="match status" value="1"/>
</dbReference>
<dbReference type="SUPFAM" id="SSF51735">
    <property type="entry name" value="NAD(P)-binding Rossmann-fold domains"/>
    <property type="match status" value="1"/>
</dbReference>
<proteinExistence type="inferred from homology"/>
<sequence>MDVTAKYELIGLMAYPIRHSLSPEMQNKALEKAGLPYTYMAFEVDNTTFASAIEGLKALKMRGTGVSMPNKQLACEYVDELTPAAKLVGAINTIVNDDGYLRGYNTDGTGHIRAIKESGFDIRGKTMVLLGAGGAATAIGAQAAIEGIKEIKLFNRKDDFFEKAVAFAKRVNENTDCVVTVTDLADQHAFTEALASADILTNGTKVGMKPLENESLIGDVSLLRPELLVTECVYNPHMTKLLQQAQQAGCKTIDGYGMLLWQGAEQFELWTGKAFPLDYVKQVMGFTA</sequence>
<feature type="chain" id="PRO_0000280774" description="Quinate/shikimate dehydrogenase">
    <location>
        <begin position="1"/>
        <end position="288"/>
    </location>
</feature>
<feature type="binding site" evidence="1">
    <location>
        <position position="71"/>
    </location>
    <ligand>
        <name>substrate</name>
    </ligand>
</feature>
<feature type="binding site" evidence="1">
    <location>
        <position position="107"/>
    </location>
    <ligand>
        <name>substrate</name>
    </ligand>
</feature>
<feature type="binding site" evidence="1">
    <location>
        <begin position="132"/>
        <end position="135"/>
    </location>
    <ligand>
        <name>NAD(+)</name>
        <dbReference type="ChEBI" id="CHEBI:57540"/>
    </ligand>
</feature>
<feature type="binding site" evidence="1">
    <location>
        <begin position="155"/>
        <end position="158"/>
    </location>
    <ligand>
        <name>NAD(+)</name>
        <dbReference type="ChEBI" id="CHEBI:57540"/>
    </ligand>
</feature>
<feature type="binding site" evidence="1">
    <location>
        <position position="205"/>
    </location>
    <ligand>
        <name>NAD(+)</name>
        <dbReference type="ChEBI" id="CHEBI:57540"/>
    </ligand>
</feature>
<feature type="binding site" evidence="1">
    <location>
        <begin position="232"/>
        <end position="235"/>
    </location>
    <ligand>
        <name>NAD(+)</name>
        <dbReference type="ChEBI" id="CHEBI:57540"/>
    </ligand>
</feature>
<feature type="binding site" evidence="1">
    <location>
        <position position="255"/>
    </location>
    <ligand>
        <name>NAD(+)</name>
        <dbReference type="ChEBI" id="CHEBI:57540"/>
    </ligand>
</feature>
<keyword id="KW-0028">Amino-acid biosynthesis</keyword>
<keyword id="KW-0057">Aromatic amino acid biosynthesis</keyword>
<keyword id="KW-0520">NAD</keyword>
<keyword id="KW-0521">NADP</keyword>
<keyword id="KW-0560">Oxidoreductase</keyword>
<evidence type="ECO:0000255" key="1">
    <source>
        <dbReference type="HAMAP-Rule" id="MF_01578"/>
    </source>
</evidence>
<gene>
    <name evidence="1" type="primary">ydiB</name>
    <name type="ordered locus">SCH_1378</name>
</gene>
<accession>Q57PS7</accession>
<reference key="1">
    <citation type="journal article" date="2005" name="Nucleic Acids Res.">
        <title>The genome sequence of Salmonella enterica serovar Choleraesuis, a highly invasive and resistant zoonotic pathogen.</title>
        <authorList>
            <person name="Chiu C.-H."/>
            <person name="Tang P."/>
            <person name="Chu C."/>
            <person name="Hu S."/>
            <person name="Bao Q."/>
            <person name="Yu J."/>
            <person name="Chou Y.-Y."/>
            <person name="Wang H.-S."/>
            <person name="Lee Y.-S."/>
        </authorList>
    </citation>
    <scope>NUCLEOTIDE SEQUENCE [LARGE SCALE GENOMIC DNA]</scope>
    <source>
        <strain>SC-B67</strain>
    </source>
</reference>
<comment type="function">
    <text evidence="1">The actual biological function of YdiB remains unclear, nor is it known whether 3-dehydroshikimate or quinate represents the natural substrate. Catalyzes the reversible NAD-dependent reduction of both 3-dehydroshikimate (DHSA) and 3-dehydroquinate to yield shikimate (SA) and quinate, respectively. It can use both NAD or NADP for catalysis, however it has higher catalytic efficiency with NAD.</text>
</comment>
<comment type="catalytic activity">
    <reaction evidence="1">
        <text>L-quinate + NAD(+) = 3-dehydroquinate + NADH + H(+)</text>
        <dbReference type="Rhea" id="RHEA:22364"/>
        <dbReference type="ChEBI" id="CHEBI:15378"/>
        <dbReference type="ChEBI" id="CHEBI:29751"/>
        <dbReference type="ChEBI" id="CHEBI:32364"/>
        <dbReference type="ChEBI" id="CHEBI:57540"/>
        <dbReference type="ChEBI" id="CHEBI:57945"/>
        <dbReference type="EC" id="1.1.1.282"/>
    </reaction>
</comment>
<comment type="catalytic activity">
    <reaction evidence="1">
        <text>L-quinate + NADP(+) = 3-dehydroquinate + NADPH + H(+)</text>
        <dbReference type="Rhea" id="RHEA:18425"/>
        <dbReference type="ChEBI" id="CHEBI:15378"/>
        <dbReference type="ChEBI" id="CHEBI:29751"/>
        <dbReference type="ChEBI" id="CHEBI:32364"/>
        <dbReference type="ChEBI" id="CHEBI:57783"/>
        <dbReference type="ChEBI" id="CHEBI:58349"/>
        <dbReference type="EC" id="1.1.1.282"/>
    </reaction>
</comment>
<comment type="catalytic activity">
    <reaction evidence="1">
        <text>shikimate + NADP(+) = 3-dehydroshikimate + NADPH + H(+)</text>
        <dbReference type="Rhea" id="RHEA:17737"/>
        <dbReference type="ChEBI" id="CHEBI:15378"/>
        <dbReference type="ChEBI" id="CHEBI:16630"/>
        <dbReference type="ChEBI" id="CHEBI:36208"/>
        <dbReference type="ChEBI" id="CHEBI:57783"/>
        <dbReference type="ChEBI" id="CHEBI:58349"/>
        <dbReference type="EC" id="1.1.1.282"/>
    </reaction>
</comment>
<comment type="catalytic activity">
    <reaction evidence="1">
        <text>shikimate + NAD(+) = 3-dehydroshikimate + NADH + H(+)</text>
        <dbReference type="Rhea" id="RHEA:17741"/>
        <dbReference type="ChEBI" id="CHEBI:15378"/>
        <dbReference type="ChEBI" id="CHEBI:16630"/>
        <dbReference type="ChEBI" id="CHEBI:36208"/>
        <dbReference type="ChEBI" id="CHEBI:57540"/>
        <dbReference type="ChEBI" id="CHEBI:57945"/>
        <dbReference type="EC" id="1.1.1.282"/>
    </reaction>
</comment>
<comment type="pathway">
    <text evidence="1">Metabolic intermediate biosynthesis; chorismate biosynthesis; chorismate from D-erythrose 4-phosphate and phosphoenolpyruvate: step 4/7.</text>
</comment>
<comment type="subunit">
    <text evidence="1">Homodimer.</text>
</comment>
<comment type="similarity">
    <text evidence="1">Belongs to the shikimate dehydrogenase family.</text>
</comment>
<name>YDIB_SALCH</name>
<protein>
    <recommendedName>
        <fullName evidence="1">Quinate/shikimate dehydrogenase</fullName>
        <ecNumber evidence="1">1.1.1.282</ecNumber>
    </recommendedName>
    <alternativeName>
        <fullName evidence="1">NAD-dependent shikimate 5-dehydrogenase</fullName>
    </alternativeName>
</protein>
<organism>
    <name type="scientific">Salmonella choleraesuis (strain SC-B67)</name>
    <dbReference type="NCBI Taxonomy" id="321314"/>
    <lineage>
        <taxon>Bacteria</taxon>
        <taxon>Pseudomonadati</taxon>
        <taxon>Pseudomonadota</taxon>
        <taxon>Gammaproteobacteria</taxon>
        <taxon>Enterobacterales</taxon>
        <taxon>Enterobacteriaceae</taxon>
        <taxon>Salmonella</taxon>
    </lineage>
</organism>